<comment type="function">
    <text evidence="1">Zinc phosphodiesterase, which displays some tRNA 3'-processing endonuclease activity. Probably involved in tRNA maturation, by removing a 3'-trailer from precursor tRNA.</text>
</comment>
<comment type="catalytic activity">
    <reaction evidence="1">
        <text>Endonucleolytic cleavage of RNA, removing extra 3' nucleotides from tRNA precursor, generating 3' termini of tRNAs. A 3'-hydroxy group is left at the tRNA terminus and a 5'-phosphoryl group is left at the trailer molecule.</text>
        <dbReference type="EC" id="3.1.26.11"/>
    </reaction>
</comment>
<comment type="cofactor">
    <cofactor evidence="1">
        <name>Zn(2+)</name>
        <dbReference type="ChEBI" id="CHEBI:29105"/>
    </cofactor>
    <text evidence="1">Binds 2 Zn(2+) ions.</text>
</comment>
<comment type="subunit">
    <text evidence="1">Homodimer.</text>
</comment>
<comment type="similarity">
    <text evidence="1">Belongs to the RNase Z family.</text>
</comment>
<accession>A3Q2B8</accession>
<name>RNZ_MYCSJ</name>
<keyword id="KW-0255">Endonuclease</keyword>
<keyword id="KW-0378">Hydrolase</keyword>
<keyword id="KW-0479">Metal-binding</keyword>
<keyword id="KW-0540">Nuclease</keyword>
<keyword id="KW-0819">tRNA processing</keyword>
<keyword id="KW-0862">Zinc</keyword>
<reference key="1">
    <citation type="submission" date="2007-02" db="EMBL/GenBank/DDBJ databases">
        <title>Complete sequence of Mycobacterium sp. JLS.</title>
        <authorList>
            <consortium name="US DOE Joint Genome Institute"/>
            <person name="Copeland A."/>
            <person name="Lucas S."/>
            <person name="Lapidus A."/>
            <person name="Barry K."/>
            <person name="Detter J.C."/>
            <person name="Glavina del Rio T."/>
            <person name="Hammon N."/>
            <person name="Israni S."/>
            <person name="Dalin E."/>
            <person name="Tice H."/>
            <person name="Pitluck S."/>
            <person name="Chain P."/>
            <person name="Malfatti S."/>
            <person name="Shin M."/>
            <person name="Vergez L."/>
            <person name="Schmutz J."/>
            <person name="Larimer F."/>
            <person name="Land M."/>
            <person name="Hauser L."/>
            <person name="Kyrpides N."/>
            <person name="Mikhailova N."/>
            <person name="Miller C.D."/>
            <person name="Anderson A.J."/>
            <person name="Sims R.C."/>
            <person name="Richardson P."/>
        </authorList>
    </citation>
    <scope>NUCLEOTIDE SEQUENCE [LARGE SCALE GENOMIC DNA]</scope>
    <source>
        <strain>JLS</strain>
    </source>
</reference>
<gene>
    <name evidence="1" type="primary">rnz</name>
    <name type="ordered locus">Mjls_3518</name>
</gene>
<evidence type="ECO:0000255" key="1">
    <source>
        <dbReference type="HAMAP-Rule" id="MF_01818"/>
    </source>
</evidence>
<dbReference type="EC" id="3.1.26.11" evidence="1"/>
<dbReference type="EMBL" id="CP000580">
    <property type="protein sequence ID" value="ABN99295.1"/>
    <property type="molecule type" value="Genomic_DNA"/>
</dbReference>
<dbReference type="SMR" id="A3Q2B8"/>
<dbReference type="KEGG" id="mjl:Mjls_3518"/>
<dbReference type="HOGENOM" id="CLU_031317_0_0_11"/>
<dbReference type="BioCyc" id="MSP164757:G1G8C-3548-MONOMER"/>
<dbReference type="GO" id="GO:0042781">
    <property type="term" value="F:3'-tRNA processing endoribonuclease activity"/>
    <property type="evidence" value="ECO:0007669"/>
    <property type="project" value="UniProtKB-UniRule"/>
</dbReference>
<dbReference type="GO" id="GO:0046872">
    <property type="term" value="F:metal ion binding"/>
    <property type="evidence" value="ECO:0007669"/>
    <property type="project" value="UniProtKB-KW"/>
</dbReference>
<dbReference type="CDD" id="cd07719">
    <property type="entry name" value="arylsulfatase_AtsA-like_MBL-fold"/>
    <property type="match status" value="1"/>
</dbReference>
<dbReference type="Gene3D" id="3.60.15.10">
    <property type="entry name" value="Ribonuclease Z/Hydroxyacylglutathione hydrolase-like"/>
    <property type="match status" value="1"/>
</dbReference>
<dbReference type="HAMAP" id="MF_01818">
    <property type="entry name" value="RNase_Z_BN"/>
    <property type="match status" value="1"/>
</dbReference>
<dbReference type="InterPro" id="IPR044094">
    <property type="entry name" value="AtsA-like_MBL-fold"/>
</dbReference>
<dbReference type="InterPro" id="IPR001279">
    <property type="entry name" value="Metallo-B-lactamas"/>
</dbReference>
<dbReference type="InterPro" id="IPR036866">
    <property type="entry name" value="RibonucZ/Hydroxyglut_hydro"/>
</dbReference>
<dbReference type="InterPro" id="IPR013471">
    <property type="entry name" value="RNase_Z/BN"/>
</dbReference>
<dbReference type="NCBIfam" id="NF000806">
    <property type="entry name" value="PRK00055.2-4"/>
    <property type="match status" value="1"/>
</dbReference>
<dbReference type="PANTHER" id="PTHR46018">
    <property type="entry name" value="ZINC PHOSPHODIESTERASE ELAC PROTEIN 1"/>
    <property type="match status" value="1"/>
</dbReference>
<dbReference type="PANTHER" id="PTHR46018:SF2">
    <property type="entry name" value="ZINC PHOSPHODIESTERASE ELAC PROTEIN 1"/>
    <property type="match status" value="1"/>
</dbReference>
<dbReference type="Pfam" id="PF12706">
    <property type="entry name" value="Lactamase_B_2"/>
    <property type="match status" value="1"/>
</dbReference>
<dbReference type="SMART" id="SM00849">
    <property type="entry name" value="Lactamase_B"/>
    <property type="match status" value="1"/>
</dbReference>
<dbReference type="SUPFAM" id="SSF56281">
    <property type="entry name" value="Metallo-hydrolase/oxidoreductase"/>
    <property type="match status" value="1"/>
</dbReference>
<organism>
    <name type="scientific">Mycobacterium sp. (strain JLS)</name>
    <dbReference type="NCBI Taxonomy" id="164757"/>
    <lineage>
        <taxon>Bacteria</taxon>
        <taxon>Bacillati</taxon>
        <taxon>Actinomycetota</taxon>
        <taxon>Actinomycetes</taxon>
        <taxon>Mycobacteriales</taxon>
        <taxon>Mycobacteriaceae</taxon>
        <taxon>Mycobacterium</taxon>
    </lineage>
</organism>
<protein>
    <recommendedName>
        <fullName evidence="1">Ribonuclease Z</fullName>
        <shortName evidence="1">RNase Z</shortName>
        <ecNumber evidence="1">3.1.26.11</ecNumber>
    </recommendedName>
    <alternativeName>
        <fullName evidence="1">tRNA 3 endonuclease</fullName>
    </alternativeName>
    <alternativeName>
        <fullName evidence="1">tRNase Z</fullName>
    </alternativeName>
</protein>
<feature type="chain" id="PRO_1000070303" description="Ribonuclease Z">
    <location>
        <begin position="1"/>
        <end position="285"/>
    </location>
</feature>
<feature type="active site" description="Proton acceptor" evidence="1">
    <location>
        <position position="65"/>
    </location>
</feature>
<feature type="binding site" evidence="1">
    <location>
        <position position="61"/>
    </location>
    <ligand>
        <name>Zn(2+)</name>
        <dbReference type="ChEBI" id="CHEBI:29105"/>
        <label>1</label>
        <note>catalytic</note>
    </ligand>
</feature>
<feature type="binding site" evidence="1">
    <location>
        <position position="63"/>
    </location>
    <ligand>
        <name>Zn(2+)</name>
        <dbReference type="ChEBI" id="CHEBI:29105"/>
        <label>1</label>
        <note>catalytic</note>
    </ligand>
</feature>
<feature type="binding site" evidence="1">
    <location>
        <position position="65"/>
    </location>
    <ligand>
        <name>Zn(2+)</name>
        <dbReference type="ChEBI" id="CHEBI:29105"/>
        <label>2</label>
        <note>catalytic</note>
    </ligand>
</feature>
<feature type="binding site" evidence="1">
    <location>
        <position position="66"/>
    </location>
    <ligand>
        <name>Zn(2+)</name>
        <dbReference type="ChEBI" id="CHEBI:29105"/>
        <label>2</label>
        <note>catalytic</note>
    </ligand>
</feature>
<feature type="binding site" evidence="1">
    <location>
        <position position="152"/>
    </location>
    <ligand>
        <name>Zn(2+)</name>
        <dbReference type="ChEBI" id="CHEBI:29105"/>
        <label>1</label>
        <note>catalytic</note>
    </ligand>
</feature>
<feature type="binding site" evidence="1">
    <location>
        <position position="175"/>
    </location>
    <ligand>
        <name>Zn(2+)</name>
        <dbReference type="ChEBI" id="CHEBI:29105"/>
        <label>1</label>
        <note>catalytic</note>
    </ligand>
</feature>
<feature type="binding site" evidence="1">
    <location>
        <position position="175"/>
    </location>
    <ligand>
        <name>Zn(2+)</name>
        <dbReference type="ChEBI" id="CHEBI:29105"/>
        <label>2</label>
        <note>catalytic</note>
    </ligand>
</feature>
<feature type="binding site" evidence="1">
    <location>
        <position position="239"/>
    </location>
    <ligand>
        <name>Zn(2+)</name>
        <dbReference type="ChEBI" id="CHEBI:29105"/>
        <label>2</label>
        <note>catalytic</note>
    </ligand>
</feature>
<proteinExistence type="inferred from homology"/>
<sequence length="285" mass="29979">MIEVTLLGTGSPVPDARRAGPSTLVRAGGHAFLVDCGRGVQLRMAAAGIAANGLSALLLTHLHSDHIADLGDLLITRWVTTFTDQVPLQIIGPPGTAETVTAMLAAFGRDIGYRIAHHPDLTAPPPVEVHEVTEGVAWDHDGVTVRVAPTDHRPVAPTIGFRVEHADASVVLAGDTVPCATLDALAAGAGALVHTAIRKDLVELAPQQRVREVCEYHSSVEEAAETAERAGVGILVLTHYLPPIAPGQEADWRARAATAFPRQIELGDDLHRVEVHPGVCVKPAG</sequence>